<evidence type="ECO:0000250" key="1">
    <source>
        <dbReference type="UniProtKB" id="P61889"/>
    </source>
</evidence>
<evidence type="ECO:0000305" key="2"/>
<name>MDH_CAMJE</name>
<organism>
    <name type="scientific">Campylobacter jejuni subsp. jejuni serotype O:2 (strain ATCC 700819 / NCTC 11168)</name>
    <dbReference type="NCBI Taxonomy" id="192222"/>
    <lineage>
        <taxon>Bacteria</taxon>
        <taxon>Pseudomonadati</taxon>
        <taxon>Campylobacterota</taxon>
        <taxon>Epsilonproteobacteria</taxon>
        <taxon>Campylobacterales</taxon>
        <taxon>Campylobacteraceae</taxon>
        <taxon>Campylobacter</taxon>
    </lineage>
</organism>
<proteinExistence type="inferred from homology"/>
<reference key="1">
    <citation type="journal article" date="2000" name="Nature">
        <title>The genome sequence of the food-borne pathogen Campylobacter jejuni reveals hypervariable sequences.</title>
        <authorList>
            <person name="Parkhill J."/>
            <person name="Wren B.W."/>
            <person name="Mungall K.L."/>
            <person name="Ketley J.M."/>
            <person name="Churcher C.M."/>
            <person name="Basham D."/>
            <person name="Chillingworth T."/>
            <person name="Davies R.M."/>
            <person name="Feltwell T."/>
            <person name="Holroyd S."/>
            <person name="Jagels K."/>
            <person name="Karlyshev A.V."/>
            <person name="Moule S."/>
            <person name="Pallen M.J."/>
            <person name="Penn C.W."/>
            <person name="Quail M.A."/>
            <person name="Rajandream M.A."/>
            <person name="Rutherford K.M."/>
            <person name="van Vliet A.H.M."/>
            <person name="Whitehead S."/>
            <person name="Barrell B.G."/>
        </authorList>
    </citation>
    <scope>NUCLEOTIDE SEQUENCE [LARGE SCALE GENOMIC DNA]</scope>
    <source>
        <strain>ATCC 700819 / NCTC 11168</strain>
    </source>
</reference>
<gene>
    <name type="primary">mdh</name>
    <name type="ordered locus">Cj0532</name>
</gene>
<sequence length="300" mass="33513">MKITVIGAGNVGSSVAYALILREIANEIVLVDINEDLLYAKELELTQSIAALNLNIDLLCTKDYTHTKNSDIVLFSAGFARKDGQSREELLQLNTSIMLDCAKKIKDFTEDPLFIILTNPVDFLLNTLYESGIFSSKKIIAMAGVLDNARFKYELAKKLNVKMSRVDTRLIGFHNDDMVLVKSYASVKNKNISEFLNEEEFEDLENEVKTGGAKVIKHLKTSAYLAPASACIRMLESIRSGEFLPMSVILHGEFGVQNKALGVMARLGLEGVIEIMKMDLSLQEKDKLEKSLIKYQYKGE</sequence>
<dbReference type="EC" id="1.1.1.37" evidence="1"/>
<dbReference type="EMBL" id="AL111168">
    <property type="protein sequence ID" value="CAL34678.1"/>
    <property type="molecule type" value="Genomic_DNA"/>
</dbReference>
<dbReference type="PIR" id="D81399">
    <property type="entry name" value="D81399"/>
</dbReference>
<dbReference type="RefSeq" id="WP_002858544.1">
    <property type="nucleotide sequence ID" value="NZ_SZUC01000002.1"/>
</dbReference>
<dbReference type="RefSeq" id="YP_002343963.1">
    <property type="nucleotide sequence ID" value="NC_002163.1"/>
</dbReference>
<dbReference type="SMR" id="Q9PHY2"/>
<dbReference type="IntAct" id="Q9PHY2">
    <property type="interactions" value="1"/>
</dbReference>
<dbReference type="STRING" id="192222.Cj0532"/>
<dbReference type="PaxDb" id="192222-Cj0532"/>
<dbReference type="EnsemblBacteria" id="CAL34678">
    <property type="protein sequence ID" value="CAL34678"/>
    <property type="gene ID" value="Cj0532"/>
</dbReference>
<dbReference type="GeneID" id="904860"/>
<dbReference type="KEGG" id="cje:Cj0532"/>
<dbReference type="PATRIC" id="fig|192222.6.peg.524"/>
<dbReference type="eggNOG" id="COG0039">
    <property type="taxonomic scope" value="Bacteria"/>
</dbReference>
<dbReference type="HOGENOM" id="CLU_045401_2_1_7"/>
<dbReference type="OrthoDB" id="9802969at2"/>
<dbReference type="Proteomes" id="UP000000799">
    <property type="component" value="Chromosome"/>
</dbReference>
<dbReference type="GO" id="GO:0004459">
    <property type="term" value="F:L-lactate dehydrogenase activity"/>
    <property type="evidence" value="ECO:0007669"/>
    <property type="project" value="TreeGrafter"/>
</dbReference>
<dbReference type="GO" id="GO:0030060">
    <property type="term" value="F:L-malate dehydrogenase (NAD+) activity"/>
    <property type="evidence" value="ECO:0007669"/>
    <property type="project" value="UniProtKB-EC"/>
</dbReference>
<dbReference type="GO" id="GO:0006089">
    <property type="term" value="P:lactate metabolic process"/>
    <property type="evidence" value="ECO:0007669"/>
    <property type="project" value="TreeGrafter"/>
</dbReference>
<dbReference type="GO" id="GO:0006099">
    <property type="term" value="P:tricarboxylic acid cycle"/>
    <property type="evidence" value="ECO:0007669"/>
    <property type="project" value="UniProtKB-KW"/>
</dbReference>
<dbReference type="Gene3D" id="3.90.110.10">
    <property type="entry name" value="Lactate dehydrogenase/glycoside hydrolase, family 4, C-terminal"/>
    <property type="match status" value="1"/>
</dbReference>
<dbReference type="Gene3D" id="3.40.50.720">
    <property type="entry name" value="NAD(P)-binding Rossmann-like Domain"/>
    <property type="match status" value="1"/>
</dbReference>
<dbReference type="InterPro" id="IPR001557">
    <property type="entry name" value="L-lactate/malate_DH"/>
</dbReference>
<dbReference type="InterPro" id="IPR022383">
    <property type="entry name" value="Lactate/malate_DH_C"/>
</dbReference>
<dbReference type="InterPro" id="IPR001236">
    <property type="entry name" value="Lactate/malate_DH_N"/>
</dbReference>
<dbReference type="InterPro" id="IPR015955">
    <property type="entry name" value="Lactate_DH/Glyco_Ohase_4_C"/>
</dbReference>
<dbReference type="InterPro" id="IPR036291">
    <property type="entry name" value="NAD(P)-bd_dom_sf"/>
</dbReference>
<dbReference type="PANTHER" id="PTHR43128">
    <property type="entry name" value="L-2-HYDROXYCARBOXYLATE DEHYDROGENASE (NAD(P)(+))"/>
    <property type="match status" value="1"/>
</dbReference>
<dbReference type="PANTHER" id="PTHR43128:SF16">
    <property type="entry name" value="L-LACTATE DEHYDROGENASE"/>
    <property type="match status" value="1"/>
</dbReference>
<dbReference type="Pfam" id="PF02866">
    <property type="entry name" value="Ldh_1_C"/>
    <property type="match status" value="1"/>
</dbReference>
<dbReference type="Pfam" id="PF00056">
    <property type="entry name" value="Ldh_1_N"/>
    <property type="match status" value="1"/>
</dbReference>
<dbReference type="PIRSF" id="PIRSF000102">
    <property type="entry name" value="Lac_mal_DH"/>
    <property type="match status" value="1"/>
</dbReference>
<dbReference type="PRINTS" id="PR00086">
    <property type="entry name" value="LLDHDRGNASE"/>
</dbReference>
<dbReference type="SUPFAM" id="SSF56327">
    <property type="entry name" value="LDH C-terminal domain-like"/>
    <property type="match status" value="1"/>
</dbReference>
<dbReference type="SUPFAM" id="SSF51735">
    <property type="entry name" value="NAD(P)-binding Rossmann-fold domains"/>
    <property type="match status" value="1"/>
</dbReference>
<protein>
    <recommendedName>
        <fullName evidence="2">Probable malate dehydrogenase</fullName>
        <ecNumber evidence="1">1.1.1.37</ecNumber>
    </recommendedName>
</protein>
<accession>Q9PHY2</accession>
<accession>Q0PAY4</accession>
<feature type="chain" id="PRO_0000113445" description="Probable malate dehydrogenase">
    <location>
        <begin position="1"/>
        <end position="300"/>
    </location>
</feature>
<feature type="active site" description="Proton acceptor" evidence="1">
    <location>
        <position position="174"/>
    </location>
</feature>
<feature type="binding site" evidence="1">
    <location>
        <begin position="6"/>
        <end position="12"/>
    </location>
    <ligand>
        <name>NAD(+)</name>
        <dbReference type="ChEBI" id="CHEBI:57540"/>
    </ligand>
</feature>
<feature type="binding site" evidence="1">
    <location>
        <position position="81"/>
    </location>
    <ligand>
        <name>substrate</name>
    </ligand>
</feature>
<feature type="binding site" evidence="1">
    <location>
        <position position="87"/>
    </location>
    <ligand>
        <name>substrate</name>
    </ligand>
</feature>
<feature type="binding site" evidence="1">
    <location>
        <position position="94"/>
    </location>
    <ligand>
        <name>NAD(+)</name>
        <dbReference type="ChEBI" id="CHEBI:57540"/>
    </ligand>
</feature>
<feature type="binding site" evidence="1">
    <location>
        <begin position="117"/>
        <end position="119"/>
    </location>
    <ligand>
        <name>NAD(+)</name>
        <dbReference type="ChEBI" id="CHEBI:57540"/>
    </ligand>
</feature>
<feature type="binding site" evidence="1">
    <location>
        <position position="119"/>
    </location>
    <ligand>
        <name>substrate</name>
    </ligand>
</feature>
<feature type="binding site" evidence="1">
    <location>
        <position position="150"/>
    </location>
    <ligand>
        <name>substrate</name>
    </ligand>
</feature>
<comment type="function">
    <text evidence="1">Catalyzes the reversible oxidation of malate to oxaloacetate.</text>
</comment>
<comment type="catalytic activity">
    <reaction evidence="1">
        <text>(S)-malate + NAD(+) = oxaloacetate + NADH + H(+)</text>
        <dbReference type="Rhea" id="RHEA:21432"/>
        <dbReference type="ChEBI" id="CHEBI:15378"/>
        <dbReference type="ChEBI" id="CHEBI:15589"/>
        <dbReference type="ChEBI" id="CHEBI:16452"/>
        <dbReference type="ChEBI" id="CHEBI:57540"/>
        <dbReference type="ChEBI" id="CHEBI:57945"/>
        <dbReference type="EC" id="1.1.1.37"/>
    </reaction>
</comment>
<comment type="similarity">
    <text evidence="2">Belongs to the LDH/MDH superfamily.</text>
</comment>
<keyword id="KW-0520">NAD</keyword>
<keyword id="KW-0560">Oxidoreductase</keyword>
<keyword id="KW-1185">Reference proteome</keyword>
<keyword id="KW-0816">Tricarboxylic acid cycle</keyword>